<accession>Q1BXT4</accession>
<evidence type="ECO:0000255" key="1">
    <source>
        <dbReference type="HAMAP-Rule" id="MF_00141"/>
    </source>
</evidence>
<reference key="1">
    <citation type="submission" date="2006-05" db="EMBL/GenBank/DDBJ databases">
        <title>Complete sequence of chromosome 1 of Burkholderia cenocepacia AU 1054.</title>
        <authorList>
            <consortium name="US DOE Joint Genome Institute"/>
            <person name="Copeland A."/>
            <person name="Lucas S."/>
            <person name="Lapidus A."/>
            <person name="Barry K."/>
            <person name="Detter J.C."/>
            <person name="Glavina del Rio T."/>
            <person name="Hammon N."/>
            <person name="Israni S."/>
            <person name="Dalin E."/>
            <person name="Tice H."/>
            <person name="Pitluck S."/>
            <person name="Chain P."/>
            <person name="Malfatti S."/>
            <person name="Shin M."/>
            <person name="Vergez L."/>
            <person name="Schmutz J."/>
            <person name="Larimer F."/>
            <person name="Land M."/>
            <person name="Hauser L."/>
            <person name="Kyrpides N."/>
            <person name="Lykidis A."/>
            <person name="LiPuma J.J."/>
            <person name="Konstantinidis K."/>
            <person name="Tiedje J.M."/>
            <person name="Richardson P."/>
        </authorList>
    </citation>
    <scope>NUCLEOTIDE SEQUENCE [LARGE SCALE GENOMIC DNA]</scope>
    <source>
        <strain>AU 1054</strain>
    </source>
</reference>
<organism>
    <name type="scientific">Burkholderia orbicola (strain AU 1054)</name>
    <dbReference type="NCBI Taxonomy" id="331271"/>
    <lineage>
        <taxon>Bacteria</taxon>
        <taxon>Pseudomonadati</taxon>
        <taxon>Pseudomonadota</taxon>
        <taxon>Betaproteobacteria</taxon>
        <taxon>Burkholderiales</taxon>
        <taxon>Burkholderiaceae</taxon>
        <taxon>Burkholderia</taxon>
        <taxon>Burkholderia cepacia complex</taxon>
        <taxon>Burkholderia orbicola</taxon>
    </lineage>
</organism>
<protein>
    <recommendedName>
        <fullName evidence="1">Elongation factor P</fullName>
        <shortName evidence="1">EF-P</shortName>
    </recommendedName>
</protein>
<proteinExistence type="inferred from homology"/>
<gene>
    <name evidence="1" type="primary">efp</name>
    <name type="ordered locus">Bcen_0661</name>
</gene>
<keyword id="KW-0963">Cytoplasm</keyword>
<keyword id="KW-0251">Elongation factor</keyword>
<keyword id="KW-0648">Protein biosynthesis</keyword>
<sequence>MKTAQELRVGNVVQIGSEAWVIAKAEYNKSGRNSAVVKMKMKNLLSNAGQESVYKADDKFEVVVLDRKEVTYSYFADPMYVFMDADYNQYEVEAEMMGEALNYLEDGMACEVVFYNEKAISVELPTVLVREITYTEPAVKGDTSSGKVLKNAKLATGFELQVPLFCNTGDKIEIDTRTNEYRSRA</sequence>
<feature type="chain" id="PRO_1000010694" description="Elongation factor P">
    <location>
        <begin position="1"/>
        <end position="185"/>
    </location>
</feature>
<dbReference type="EMBL" id="CP000378">
    <property type="protein sequence ID" value="ABF75571.1"/>
    <property type="molecule type" value="Genomic_DNA"/>
</dbReference>
<dbReference type="SMR" id="Q1BXT4"/>
<dbReference type="HOGENOM" id="CLU_074944_2_1_4"/>
<dbReference type="UniPathway" id="UPA00345"/>
<dbReference type="GO" id="GO:0005737">
    <property type="term" value="C:cytoplasm"/>
    <property type="evidence" value="ECO:0007669"/>
    <property type="project" value="UniProtKB-SubCell"/>
</dbReference>
<dbReference type="GO" id="GO:0003746">
    <property type="term" value="F:translation elongation factor activity"/>
    <property type="evidence" value="ECO:0007669"/>
    <property type="project" value="UniProtKB-UniRule"/>
</dbReference>
<dbReference type="GO" id="GO:0043043">
    <property type="term" value="P:peptide biosynthetic process"/>
    <property type="evidence" value="ECO:0007669"/>
    <property type="project" value="InterPro"/>
</dbReference>
<dbReference type="CDD" id="cd04470">
    <property type="entry name" value="S1_EF-P_repeat_1"/>
    <property type="match status" value="1"/>
</dbReference>
<dbReference type="CDD" id="cd05794">
    <property type="entry name" value="S1_EF-P_repeat_2"/>
    <property type="match status" value="1"/>
</dbReference>
<dbReference type="FunFam" id="2.30.30.30:FF:000003">
    <property type="entry name" value="Elongation factor P"/>
    <property type="match status" value="1"/>
</dbReference>
<dbReference type="FunFam" id="2.40.50.140:FF:000004">
    <property type="entry name" value="Elongation factor P"/>
    <property type="match status" value="1"/>
</dbReference>
<dbReference type="FunFam" id="2.40.50.140:FF:000009">
    <property type="entry name" value="Elongation factor P"/>
    <property type="match status" value="1"/>
</dbReference>
<dbReference type="Gene3D" id="2.30.30.30">
    <property type="match status" value="1"/>
</dbReference>
<dbReference type="Gene3D" id="2.40.50.140">
    <property type="entry name" value="Nucleic acid-binding proteins"/>
    <property type="match status" value="2"/>
</dbReference>
<dbReference type="HAMAP" id="MF_00141">
    <property type="entry name" value="EF_P"/>
    <property type="match status" value="1"/>
</dbReference>
<dbReference type="InterPro" id="IPR015365">
    <property type="entry name" value="Elong-fact-P_C"/>
</dbReference>
<dbReference type="InterPro" id="IPR012340">
    <property type="entry name" value="NA-bd_OB-fold"/>
</dbReference>
<dbReference type="InterPro" id="IPR014722">
    <property type="entry name" value="Rib_uL2_dom2"/>
</dbReference>
<dbReference type="InterPro" id="IPR020599">
    <property type="entry name" value="Transl_elong_fac_P/YeiP"/>
</dbReference>
<dbReference type="InterPro" id="IPR013185">
    <property type="entry name" value="Transl_elong_KOW-like"/>
</dbReference>
<dbReference type="InterPro" id="IPR001059">
    <property type="entry name" value="Transl_elong_P/YeiP_cen"/>
</dbReference>
<dbReference type="InterPro" id="IPR013852">
    <property type="entry name" value="Transl_elong_P/YeiP_CS"/>
</dbReference>
<dbReference type="InterPro" id="IPR011768">
    <property type="entry name" value="Transl_elongation_fac_P"/>
</dbReference>
<dbReference type="InterPro" id="IPR008991">
    <property type="entry name" value="Translation_prot_SH3-like_sf"/>
</dbReference>
<dbReference type="NCBIfam" id="TIGR00038">
    <property type="entry name" value="efp"/>
    <property type="match status" value="1"/>
</dbReference>
<dbReference type="NCBIfam" id="NF001810">
    <property type="entry name" value="PRK00529.1"/>
    <property type="match status" value="1"/>
</dbReference>
<dbReference type="PANTHER" id="PTHR30053">
    <property type="entry name" value="ELONGATION FACTOR P"/>
    <property type="match status" value="1"/>
</dbReference>
<dbReference type="PANTHER" id="PTHR30053:SF12">
    <property type="entry name" value="ELONGATION FACTOR P (EF-P) FAMILY PROTEIN"/>
    <property type="match status" value="1"/>
</dbReference>
<dbReference type="Pfam" id="PF01132">
    <property type="entry name" value="EFP"/>
    <property type="match status" value="1"/>
</dbReference>
<dbReference type="Pfam" id="PF08207">
    <property type="entry name" value="EFP_N"/>
    <property type="match status" value="1"/>
</dbReference>
<dbReference type="Pfam" id="PF09285">
    <property type="entry name" value="Elong-fact-P_C"/>
    <property type="match status" value="1"/>
</dbReference>
<dbReference type="PIRSF" id="PIRSF005901">
    <property type="entry name" value="EF-P"/>
    <property type="match status" value="1"/>
</dbReference>
<dbReference type="SMART" id="SM01185">
    <property type="entry name" value="EFP"/>
    <property type="match status" value="1"/>
</dbReference>
<dbReference type="SMART" id="SM00841">
    <property type="entry name" value="Elong-fact-P_C"/>
    <property type="match status" value="1"/>
</dbReference>
<dbReference type="SUPFAM" id="SSF50249">
    <property type="entry name" value="Nucleic acid-binding proteins"/>
    <property type="match status" value="2"/>
</dbReference>
<dbReference type="SUPFAM" id="SSF50104">
    <property type="entry name" value="Translation proteins SH3-like domain"/>
    <property type="match status" value="1"/>
</dbReference>
<dbReference type="PROSITE" id="PS01275">
    <property type="entry name" value="EFP"/>
    <property type="match status" value="1"/>
</dbReference>
<comment type="function">
    <text evidence="1">Involved in peptide bond synthesis. Stimulates efficient translation and peptide-bond synthesis on native or reconstituted 70S ribosomes in vitro. Probably functions indirectly by altering the affinity of the ribosome for aminoacyl-tRNA, thus increasing their reactivity as acceptors for peptidyl transferase.</text>
</comment>
<comment type="pathway">
    <text evidence="1">Protein biosynthesis; polypeptide chain elongation.</text>
</comment>
<comment type="subcellular location">
    <subcellularLocation>
        <location evidence="1">Cytoplasm</location>
    </subcellularLocation>
</comment>
<comment type="similarity">
    <text evidence="1">Belongs to the elongation factor P family.</text>
</comment>
<name>EFP_BURO1</name>